<gene>
    <name type="primary">yjcZ</name>
    <name type="ordered locus">b4110</name>
    <name type="ordered locus">JW5729</name>
</gene>
<protein>
    <recommendedName>
        <fullName>Uncharacterized protein YjcZ</fullName>
    </recommendedName>
</protein>
<sequence>MTKTLLDGPGRVLESVYPRFLVDLAQGDDARLPQAHQQQFRERLMQELLSRVQLQTWTNGGMLNAPLSLRLTLVEKLASMLDPGHLALTQIAQHLALLQKMDHRQHSAFPELPQQIAALYEWFSARCRWKEKALTQRGLLVQAGDQSEQIFTRWRAGAYNAWSLPGRCFIVLEELRWGAFGDACRLGSPQAVALLLGDLLEKATQHLAESINAAPTTRHYYHQWFASSTVPTGGEHADFLSWLGKWTTADKQPVCWSVTQRWQTVALGMPRLCSAQRLAGAMLEEIFSVNLA</sequence>
<organism>
    <name type="scientific">Escherichia coli (strain K12)</name>
    <dbReference type="NCBI Taxonomy" id="83333"/>
    <lineage>
        <taxon>Bacteria</taxon>
        <taxon>Pseudomonadati</taxon>
        <taxon>Pseudomonadota</taxon>
        <taxon>Gammaproteobacteria</taxon>
        <taxon>Enterobacterales</taxon>
        <taxon>Enterobacteriaceae</taxon>
        <taxon>Escherichia</taxon>
    </lineage>
</organism>
<name>YJCZ_ECOLI</name>
<proteinExistence type="predicted"/>
<keyword id="KW-1185">Reference proteome</keyword>
<comment type="sequence caution" evidence="1">
    <conflict type="erroneous initiation">
        <sequence resource="EMBL-CDS" id="AAA97009"/>
    </conflict>
    <text>Truncated N-terminus.</text>
</comment>
<evidence type="ECO:0000305" key="1"/>
<dbReference type="EMBL" id="U14003">
    <property type="protein sequence ID" value="AAA97009.1"/>
    <property type="status" value="ALT_INIT"/>
    <property type="molecule type" value="Genomic_DNA"/>
</dbReference>
<dbReference type="EMBL" id="U00096">
    <property type="protein sequence ID" value="AAC77071.2"/>
    <property type="molecule type" value="Genomic_DNA"/>
</dbReference>
<dbReference type="EMBL" id="AP009048">
    <property type="protein sequence ID" value="BAE78112.1"/>
    <property type="molecule type" value="Genomic_DNA"/>
</dbReference>
<dbReference type="PIR" id="S56338">
    <property type="entry name" value="S56338"/>
</dbReference>
<dbReference type="RefSeq" id="NP_418534.4">
    <property type="nucleotide sequence ID" value="NC_000913.3"/>
</dbReference>
<dbReference type="RefSeq" id="WP_000169188.1">
    <property type="nucleotide sequence ID" value="NZ_SSZK01000018.1"/>
</dbReference>
<dbReference type="SMR" id="P39267"/>
<dbReference type="BioGRID" id="4263086">
    <property type="interactions" value="11"/>
</dbReference>
<dbReference type="FunCoup" id="P39267">
    <property type="interactions" value="1"/>
</dbReference>
<dbReference type="STRING" id="511145.b4110"/>
<dbReference type="PaxDb" id="511145-b4110"/>
<dbReference type="EnsemblBacteria" id="AAC77071">
    <property type="protein sequence ID" value="AAC77071"/>
    <property type="gene ID" value="b4110"/>
</dbReference>
<dbReference type="GeneID" id="948633"/>
<dbReference type="KEGG" id="ecj:JW5729"/>
<dbReference type="KEGG" id="eco:b4110"/>
<dbReference type="KEGG" id="ecoc:C3026_22205"/>
<dbReference type="PATRIC" id="fig|1411691.4.peg.2590"/>
<dbReference type="EchoBASE" id="EB2354"/>
<dbReference type="eggNOG" id="ENOG502ZB58">
    <property type="taxonomic scope" value="Bacteria"/>
</dbReference>
<dbReference type="HOGENOM" id="CLU_081244_0_0_6"/>
<dbReference type="InParanoid" id="P39267"/>
<dbReference type="OMA" id="MLESVYP"/>
<dbReference type="OrthoDB" id="509040at2"/>
<dbReference type="BioCyc" id="EcoCyc:G7823-MONOMER"/>
<dbReference type="PRO" id="PR:P39267"/>
<dbReference type="Proteomes" id="UP000000625">
    <property type="component" value="Chromosome"/>
</dbReference>
<dbReference type="GO" id="GO:1900231">
    <property type="term" value="P:regulation of single-species biofilm formation on inanimate substrate"/>
    <property type="evidence" value="ECO:0000315"/>
    <property type="project" value="EcoCyc"/>
</dbReference>
<dbReference type="InterPro" id="IPR025599">
    <property type="entry name" value="YjcZ"/>
</dbReference>
<dbReference type="Pfam" id="PF13990">
    <property type="entry name" value="YjcZ"/>
    <property type="match status" value="1"/>
</dbReference>
<reference key="1">
    <citation type="journal article" date="1995" name="Nucleic Acids Res.">
        <title>Analysis of the Escherichia coli genome VI: DNA sequence of the region from 92.8 through 100 minutes.</title>
        <authorList>
            <person name="Burland V.D."/>
            <person name="Plunkett G. III"/>
            <person name="Sofia H.J."/>
            <person name="Daniels D.L."/>
            <person name="Blattner F.R."/>
        </authorList>
    </citation>
    <scope>NUCLEOTIDE SEQUENCE [LARGE SCALE GENOMIC DNA]</scope>
    <source>
        <strain>K12 / MG1655 / ATCC 47076</strain>
    </source>
</reference>
<reference key="2">
    <citation type="journal article" date="1997" name="Science">
        <title>The complete genome sequence of Escherichia coli K-12.</title>
        <authorList>
            <person name="Blattner F.R."/>
            <person name="Plunkett G. III"/>
            <person name="Bloch C.A."/>
            <person name="Perna N.T."/>
            <person name="Burland V."/>
            <person name="Riley M."/>
            <person name="Collado-Vides J."/>
            <person name="Glasner J.D."/>
            <person name="Rode C.K."/>
            <person name="Mayhew G.F."/>
            <person name="Gregor J."/>
            <person name="Davis N.W."/>
            <person name="Kirkpatrick H.A."/>
            <person name="Goeden M.A."/>
            <person name="Rose D.J."/>
            <person name="Mau B."/>
            <person name="Shao Y."/>
        </authorList>
    </citation>
    <scope>NUCLEOTIDE SEQUENCE [LARGE SCALE GENOMIC DNA]</scope>
    <source>
        <strain>K12 / MG1655 / ATCC 47076</strain>
    </source>
</reference>
<reference key="3">
    <citation type="journal article" date="2006" name="Mol. Syst. Biol.">
        <title>Highly accurate genome sequences of Escherichia coli K-12 strains MG1655 and W3110.</title>
        <authorList>
            <person name="Hayashi K."/>
            <person name="Morooka N."/>
            <person name="Yamamoto Y."/>
            <person name="Fujita K."/>
            <person name="Isono K."/>
            <person name="Choi S."/>
            <person name="Ohtsubo E."/>
            <person name="Baba T."/>
            <person name="Wanner B.L."/>
            <person name="Mori H."/>
            <person name="Horiuchi T."/>
        </authorList>
    </citation>
    <scope>NUCLEOTIDE SEQUENCE [LARGE SCALE GENOMIC DNA]</scope>
    <source>
        <strain>K12 / W3110 / ATCC 27325 / DSM 5911</strain>
    </source>
</reference>
<accession>P39267</accession>
<accession>Q2M6J4</accession>
<feature type="chain" id="PRO_0000169727" description="Uncharacterized protein YjcZ">
    <location>
        <begin position="1"/>
        <end position="292"/>
    </location>
</feature>